<proteinExistence type="inferred from homology"/>
<sequence>MDFGHVLTAMVTPFDAKGNVDLEKVERLVEFLLANGTEGLVVAGTTGESPTLREEEKLALFEKVVTVVNKRVPVIAGTGSNNTYVSAQLTKKATALGVDGIMAVTPYYNKPSQEGMYAHFAAIAEATHLPVMLYNIPSRSVVNLSAETIVKLSYIPNITSLKEANGDLDHMVSVIEQTPDTFHLYSGDDSLTLPALSIGAKGVVSVASHIIGPEMQQMMMAFRGGDVEHAANLHRKLLPIMKGLFTAPNPTCVKAALQIKGFDTGGVRLPLVPPTSEQRQHLQFLIEQLKVS</sequence>
<keyword id="KW-0028">Amino-acid biosynthesis</keyword>
<keyword id="KW-0963">Cytoplasm</keyword>
<keyword id="KW-0220">Diaminopimelate biosynthesis</keyword>
<keyword id="KW-0456">Lyase</keyword>
<keyword id="KW-0457">Lysine biosynthesis</keyword>
<keyword id="KW-1185">Reference proteome</keyword>
<keyword id="KW-0704">Schiff base</keyword>
<comment type="function">
    <text evidence="1">Catalyzes the condensation of (S)-aspartate-beta-semialdehyde [(S)-ASA] and pyruvate to 4-hydroxy-tetrahydrodipicolinate (HTPA).</text>
</comment>
<comment type="catalytic activity">
    <reaction evidence="1">
        <text>L-aspartate 4-semialdehyde + pyruvate = (2S,4S)-4-hydroxy-2,3,4,5-tetrahydrodipicolinate + H2O + H(+)</text>
        <dbReference type="Rhea" id="RHEA:34171"/>
        <dbReference type="ChEBI" id="CHEBI:15361"/>
        <dbReference type="ChEBI" id="CHEBI:15377"/>
        <dbReference type="ChEBI" id="CHEBI:15378"/>
        <dbReference type="ChEBI" id="CHEBI:67139"/>
        <dbReference type="ChEBI" id="CHEBI:537519"/>
        <dbReference type="EC" id="4.3.3.7"/>
    </reaction>
</comment>
<comment type="pathway">
    <text evidence="1">Amino-acid biosynthesis; L-lysine biosynthesis via DAP pathway; (S)-tetrahydrodipicolinate from L-aspartate: step 3/4.</text>
</comment>
<comment type="subunit">
    <text evidence="1">Homotetramer; dimer of dimers.</text>
</comment>
<comment type="subcellular location">
    <subcellularLocation>
        <location evidence="1">Cytoplasm</location>
    </subcellularLocation>
</comment>
<comment type="similarity">
    <text evidence="1">Belongs to the DapA family.</text>
</comment>
<comment type="caution">
    <text evidence="2">Was originally thought to be a dihydrodipicolinate synthase (DHDPS), catalyzing the condensation of (S)-aspartate-beta-semialdehyde [(S)-ASA] and pyruvate to dihydrodipicolinate (DHDP). However, it was shown in E.coli that the product of the enzymatic reaction is not dihydrodipicolinate but in fact (4S)-4-hydroxy-2,3,4,5-tetrahydro-(2S)-dipicolinic acid (HTPA), and that the consecutive dehydration reaction leading to DHDP is not spontaneous but catalyzed by DapB.</text>
</comment>
<accession>Q9KA91</accession>
<organism>
    <name type="scientific">Halalkalibacterium halodurans (strain ATCC BAA-125 / DSM 18197 / FERM 7344 / JCM 9153 / C-125)</name>
    <name type="common">Bacillus halodurans</name>
    <dbReference type="NCBI Taxonomy" id="272558"/>
    <lineage>
        <taxon>Bacteria</taxon>
        <taxon>Bacillati</taxon>
        <taxon>Bacillota</taxon>
        <taxon>Bacilli</taxon>
        <taxon>Bacillales</taxon>
        <taxon>Bacillaceae</taxon>
        <taxon>Halalkalibacterium (ex Joshi et al. 2022)</taxon>
    </lineage>
</organism>
<evidence type="ECO:0000255" key="1">
    <source>
        <dbReference type="HAMAP-Rule" id="MF_00418"/>
    </source>
</evidence>
<evidence type="ECO:0000305" key="2"/>
<dbReference type="EC" id="4.3.3.7" evidence="1"/>
<dbReference type="EMBL" id="BA000004">
    <property type="protein sequence ID" value="BAB06118.1"/>
    <property type="molecule type" value="Genomic_DNA"/>
</dbReference>
<dbReference type="PIR" id="G83949">
    <property type="entry name" value="G83949"/>
</dbReference>
<dbReference type="SMR" id="Q9KA91"/>
<dbReference type="STRING" id="272558.gene:10728297"/>
<dbReference type="KEGG" id="bha:BH2399"/>
<dbReference type="eggNOG" id="COG0329">
    <property type="taxonomic scope" value="Bacteria"/>
</dbReference>
<dbReference type="HOGENOM" id="CLU_049343_7_1_9"/>
<dbReference type="UniPathway" id="UPA00034">
    <property type="reaction ID" value="UER00017"/>
</dbReference>
<dbReference type="Proteomes" id="UP000001258">
    <property type="component" value="Chromosome"/>
</dbReference>
<dbReference type="GO" id="GO:0005829">
    <property type="term" value="C:cytosol"/>
    <property type="evidence" value="ECO:0007669"/>
    <property type="project" value="TreeGrafter"/>
</dbReference>
<dbReference type="GO" id="GO:0008840">
    <property type="term" value="F:4-hydroxy-tetrahydrodipicolinate synthase activity"/>
    <property type="evidence" value="ECO:0007669"/>
    <property type="project" value="UniProtKB-UniRule"/>
</dbReference>
<dbReference type="GO" id="GO:0019877">
    <property type="term" value="P:diaminopimelate biosynthetic process"/>
    <property type="evidence" value="ECO:0007669"/>
    <property type="project" value="UniProtKB-UniRule"/>
</dbReference>
<dbReference type="GO" id="GO:0009089">
    <property type="term" value="P:lysine biosynthetic process via diaminopimelate"/>
    <property type="evidence" value="ECO:0007669"/>
    <property type="project" value="UniProtKB-UniRule"/>
</dbReference>
<dbReference type="CDD" id="cd00950">
    <property type="entry name" value="DHDPS"/>
    <property type="match status" value="1"/>
</dbReference>
<dbReference type="Gene3D" id="3.20.20.70">
    <property type="entry name" value="Aldolase class I"/>
    <property type="match status" value="1"/>
</dbReference>
<dbReference type="HAMAP" id="MF_00418">
    <property type="entry name" value="DapA"/>
    <property type="match status" value="1"/>
</dbReference>
<dbReference type="InterPro" id="IPR013785">
    <property type="entry name" value="Aldolase_TIM"/>
</dbReference>
<dbReference type="InterPro" id="IPR005263">
    <property type="entry name" value="DapA"/>
</dbReference>
<dbReference type="InterPro" id="IPR002220">
    <property type="entry name" value="DapA-like"/>
</dbReference>
<dbReference type="InterPro" id="IPR020625">
    <property type="entry name" value="Schiff_base-form_aldolases_AS"/>
</dbReference>
<dbReference type="InterPro" id="IPR020624">
    <property type="entry name" value="Schiff_base-form_aldolases_CS"/>
</dbReference>
<dbReference type="NCBIfam" id="TIGR00674">
    <property type="entry name" value="dapA"/>
    <property type="match status" value="1"/>
</dbReference>
<dbReference type="PANTHER" id="PTHR12128:SF66">
    <property type="entry name" value="4-HYDROXY-2-OXOGLUTARATE ALDOLASE, MITOCHONDRIAL"/>
    <property type="match status" value="1"/>
</dbReference>
<dbReference type="PANTHER" id="PTHR12128">
    <property type="entry name" value="DIHYDRODIPICOLINATE SYNTHASE"/>
    <property type="match status" value="1"/>
</dbReference>
<dbReference type="Pfam" id="PF00701">
    <property type="entry name" value="DHDPS"/>
    <property type="match status" value="1"/>
</dbReference>
<dbReference type="PIRSF" id="PIRSF001365">
    <property type="entry name" value="DHDPS"/>
    <property type="match status" value="1"/>
</dbReference>
<dbReference type="PRINTS" id="PR00146">
    <property type="entry name" value="DHPICSNTHASE"/>
</dbReference>
<dbReference type="SMART" id="SM01130">
    <property type="entry name" value="DHDPS"/>
    <property type="match status" value="1"/>
</dbReference>
<dbReference type="SUPFAM" id="SSF51569">
    <property type="entry name" value="Aldolase"/>
    <property type="match status" value="1"/>
</dbReference>
<dbReference type="PROSITE" id="PS00665">
    <property type="entry name" value="DHDPS_1"/>
    <property type="match status" value="1"/>
</dbReference>
<dbReference type="PROSITE" id="PS00666">
    <property type="entry name" value="DHDPS_2"/>
    <property type="match status" value="1"/>
</dbReference>
<gene>
    <name evidence="1" type="primary">dapA2</name>
    <name type="ordered locus">BH2399</name>
</gene>
<reference key="1">
    <citation type="journal article" date="2000" name="Nucleic Acids Res.">
        <title>Complete genome sequence of the alkaliphilic bacterium Bacillus halodurans and genomic sequence comparison with Bacillus subtilis.</title>
        <authorList>
            <person name="Takami H."/>
            <person name="Nakasone K."/>
            <person name="Takaki Y."/>
            <person name="Maeno G."/>
            <person name="Sasaki R."/>
            <person name="Masui N."/>
            <person name="Fuji F."/>
            <person name="Hirama C."/>
            <person name="Nakamura Y."/>
            <person name="Ogasawara N."/>
            <person name="Kuhara S."/>
            <person name="Horikoshi K."/>
        </authorList>
    </citation>
    <scope>NUCLEOTIDE SEQUENCE [LARGE SCALE GENOMIC DNA]</scope>
    <source>
        <strain>ATCC BAA-125 / DSM 18197 / FERM 7344 / JCM 9153 / C-125</strain>
    </source>
</reference>
<protein>
    <recommendedName>
        <fullName evidence="1">4-hydroxy-tetrahydrodipicolinate synthase 2</fullName>
        <shortName evidence="1">HTPA synthase 2</shortName>
        <ecNumber evidence="1">4.3.3.7</ecNumber>
    </recommendedName>
</protein>
<feature type="chain" id="PRO_0000103083" description="4-hydroxy-tetrahydrodipicolinate synthase 2">
    <location>
        <begin position="1"/>
        <end position="292"/>
    </location>
</feature>
<feature type="active site" description="Proton donor/acceptor" evidence="1">
    <location>
        <position position="134"/>
    </location>
</feature>
<feature type="active site" description="Schiff-base intermediate with substrate" evidence="1">
    <location>
        <position position="162"/>
    </location>
</feature>
<feature type="binding site" evidence="1">
    <location>
        <position position="46"/>
    </location>
    <ligand>
        <name>pyruvate</name>
        <dbReference type="ChEBI" id="CHEBI:15361"/>
    </ligand>
</feature>
<feature type="binding site" evidence="1">
    <location>
        <position position="204"/>
    </location>
    <ligand>
        <name>pyruvate</name>
        <dbReference type="ChEBI" id="CHEBI:15361"/>
    </ligand>
</feature>
<feature type="site" description="Part of a proton relay during catalysis" evidence="1">
    <location>
        <position position="45"/>
    </location>
</feature>
<feature type="site" description="Part of a proton relay during catalysis" evidence="1">
    <location>
        <position position="108"/>
    </location>
</feature>
<name>DAPA2_HALH5</name>